<proteinExistence type="inferred from homology"/>
<accession>Q7VUJ5</accession>
<evidence type="ECO:0000255" key="1">
    <source>
        <dbReference type="HAMAP-Rule" id="MF_01705"/>
    </source>
</evidence>
<evidence type="ECO:0000255" key="2">
    <source>
        <dbReference type="PROSITE-ProRule" id="PRU01213"/>
    </source>
</evidence>
<keyword id="KW-0067">ATP-binding</keyword>
<keyword id="KW-0997">Cell inner membrane</keyword>
<keyword id="KW-1003">Cell membrane</keyword>
<keyword id="KW-0472">Membrane</keyword>
<keyword id="KW-0500">Molybdenum</keyword>
<keyword id="KW-0547">Nucleotide-binding</keyword>
<keyword id="KW-1185">Reference proteome</keyword>
<keyword id="KW-1278">Translocase</keyword>
<keyword id="KW-0813">Transport</keyword>
<organism>
    <name type="scientific">Bordetella pertussis (strain Tohama I / ATCC BAA-589 / NCTC 13251)</name>
    <dbReference type="NCBI Taxonomy" id="257313"/>
    <lineage>
        <taxon>Bacteria</taxon>
        <taxon>Pseudomonadati</taxon>
        <taxon>Pseudomonadota</taxon>
        <taxon>Betaproteobacteria</taxon>
        <taxon>Burkholderiales</taxon>
        <taxon>Alcaligenaceae</taxon>
        <taxon>Bordetella</taxon>
    </lineage>
</organism>
<feature type="chain" id="PRO_0000092532" description="Molybdenum import ATP-binding protein ModC">
    <location>
        <begin position="1"/>
        <end position="369"/>
    </location>
</feature>
<feature type="domain" description="ABC transporter" evidence="1">
    <location>
        <begin position="7"/>
        <end position="243"/>
    </location>
</feature>
<feature type="domain" description="Mop" evidence="2">
    <location>
        <begin position="304"/>
        <end position="369"/>
    </location>
</feature>
<feature type="binding site" evidence="1">
    <location>
        <begin position="41"/>
        <end position="48"/>
    </location>
    <ligand>
        <name>ATP</name>
        <dbReference type="ChEBI" id="CHEBI:30616"/>
    </ligand>
</feature>
<sequence>MPSDFPPGQAGIHARFRVDYPEFSLDVDLRLPGRGVTALFGQSGSGKTTCLRCMAGLAPVSDGYLDINGEVWLDSAARRAVPTHKRALGYVFQEASLFEHLDVLANLRYGMKRVPPALRRVDLEQATGLLGIGHLLARMPAGLSGGERQRVGIARALLTSPRLLLMDEPLAALDVQRKREILPYLERLHDELDIPVIYVSHSPDEVARLADHLVLLEQGRAVASGPLDALLTRLDLPMAMTDDASVVVTGEAAGFDPGYALLTLQLPGGRARLRFVHQAAPAGQRLRVVVHARDVSLALQQPREGSILNVLAVRVLEMAPAANPAHVMVRLDADGTPLLARITRYSRDRLALAPEMQAWAQIKAVSLLA</sequence>
<gene>
    <name evidence="1" type="primary">modC</name>
    <name type="ordered locus">BP3093</name>
</gene>
<name>MODC_BORPE</name>
<protein>
    <recommendedName>
        <fullName evidence="1">Molybdenum import ATP-binding protein ModC</fullName>
        <ecNumber evidence="1">7.3.2.5</ecNumber>
    </recommendedName>
</protein>
<reference key="1">
    <citation type="journal article" date="2003" name="Nat. Genet.">
        <title>Comparative analysis of the genome sequences of Bordetella pertussis, Bordetella parapertussis and Bordetella bronchiseptica.</title>
        <authorList>
            <person name="Parkhill J."/>
            <person name="Sebaihia M."/>
            <person name="Preston A."/>
            <person name="Murphy L.D."/>
            <person name="Thomson N.R."/>
            <person name="Harris D.E."/>
            <person name="Holden M.T.G."/>
            <person name="Churcher C.M."/>
            <person name="Bentley S.D."/>
            <person name="Mungall K.L."/>
            <person name="Cerdeno-Tarraga A.-M."/>
            <person name="Temple L."/>
            <person name="James K.D."/>
            <person name="Harris B."/>
            <person name="Quail M.A."/>
            <person name="Achtman M."/>
            <person name="Atkin R."/>
            <person name="Baker S."/>
            <person name="Basham D."/>
            <person name="Bason N."/>
            <person name="Cherevach I."/>
            <person name="Chillingworth T."/>
            <person name="Collins M."/>
            <person name="Cronin A."/>
            <person name="Davis P."/>
            <person name="Doggett J."/>
            <person name="Feltwell T."/>
            <person name="Goble A."/>
            <person name="Hamlin N."/>
            <person name="Hauser H."/>
            <person name="Holroyd S."/>
            <person name="Jagels K."/>
            <person name="Leather S."/>
            <person name="Moule S."/>
            <person name="Norberczak H."/>
            <person name="O'Neil S."/>
            <person name="Ormond D."/>
            <person name="Price C."/>
            <person name="Rabbinowitsch E."/>
            <person name="Rutter S."/>
            <person name="Sanders M."/>
            <person name="Saunders D."/>
            <person name="Seeger K."/>
            <person name="Sharp S."/>
            <person name="Simmonds M."/>
            <person name="Skelton J."/>
            <person name="Squares R."/>
            <person name="Squares S."/>
            <person name="Stevens K."/>
            <person name="Unwin L."/>
            <person name="Whitehead S."/>
            <person name="Barrell B.G."/>
            <person name="Maskell D.J."/>
        </authorList>
    </citation>
    <scope>NUCLEOTIDE SEQUENCE [LARGE SCALE GENOMIC DNA]</scope>
    <source>
        <strain>Tohama I / ATCC BAA-589 / NCTC 13251</strain>
    </source>
</reference>
<dbReference type="EC" id="7.3.2.5" evidence="1"/>
<dbReference type="EMBL" id="BX640420">
    <property type="protein sequence ID" value="CAE43361.1"/>
    <property type="molecule type" value="Genomic_DNA"/>
</dbReference>
<dbReference type="RefSeq" id="NP_881663.1">
    <property type="nucleotide sequence ID" value="NC_002929.2"/>
</dbReference>
<dbReference type="RefSeq" id="WP_010931293.1">
    <property type="nucleotide sequence ID" value="NZ_CP039022.1"/>
</dbReference>
<dbReference type="SMR" id="Q7VUJ5"/>
<dbReference type="STRING" id="257313.BP3093"/>
<dbReference type="PaxDb" id="257313-BP3093"/>
<dbReference type="GeneID" id="69603021"/>
<dbReference type="KEGG" id="bpe:BP3093"/>
<dbReference type="PATRIC" id="fig|257313.5.peg.3341"/>
<dbReference type="eggNOG" id="COG4148">
    <property type="taxonomic scope" value="Bacteria"/>
</dbReference>
<dbReference type="HOGENOM" id="CLU_000604_1_1_4"/>
<dbReference type="Proteomes" id="UP000002676">
    <property type="component" value="Chromosome"/>
</dbReference>
<dbReference type="GO" id="GO:0005886">
    <property type="term" value="C:plasma membrane"/>
    <property type="evidence" value="ECO:0007669"/>
    <property type="project" value="UniProtKB-SubCell"/>
</dbReference>
<dbReference type="GO" id="GO:0015412">
    <property type="term" value="F:ABC-type molybdate transporter activity"/>
    <property type="evidence" value="ECO:0007669"/>
    <property type="project" value="UniProtKB-EC"/>
</dbReference>
<dbReference type="GO" id="GO:0005524">
    <property type="term" value="F:ATP binding"/>
    <property type="evidence" value="ECO:0007669"/>
    <property type="project" value="UniProtKB-KW"/>
</dbReference>
<dbReference type="GO" id="GO:0016887">
    <property type="term" value="F:ATP hydrolysis activity"/>
    <property type="evidence" value="ECO:0007669"/>
    <property type="project" value="InterPro"/>
</dbReference>
<dbReference type="Gene3D" id="2.40.50.100">
    <property type="match status" value="1"/>
</dbReference>
<dbReference type="Gene3D" id="3.40.50.300">
    <property type="entry name" value="P-loop containing nucleotide triphosphate hydrolases"/>
    <property type="match status" value="1"/>
</dbReference>
<dbReference type="InterPro" id="IPR003593">
    <property type="entry name" value="AAA+_ATPase"/>
</dbReference>
<dbReference type="InterPro" id="IPR003439">
    <property type="entry name" value="ABC_transporter-like_ATP-bd"/>
</dbReference>
<dbReference type="InterPro" id="IPR017871">
    <property type="entry name" value="ABC_transporter-like_CS"/>
</dbReference>
<dbReference type="InterPro" id="IPR008995">
    <property type="entry name" value="Mo/tungstate-bd_C_term_dom"/>
</dbReference>
<dbReference type="InterPro" id="IPR011868">
    <property type="entry name" value="ModC_ABC_ATP-bd"/>
</dbReference>
<dbReference type="InterPro" id="IPR050334">
    <property type="entry name" value="Molybdenum_import_ModC"/>
</dbReference>
<dbReference type="InterPro" id="IPR004606">
    <property type="entry name" value="Mop_domain"/>
</dbReference>
<dbReference type="InterPro" id="IPR027417">
    <property type="entry name" value="P-loop_NTPase"/>
</dbReference>
<dbReference type="InterPro" id="IPR005116">
    <property type="entry name" value="Transp-assoc_OB_typ1"/>
</dbReference>
<dbReference type="NCBIfam" id="TIGR02142">
    <property type="entry name" value="modC_ABC"/>
    <property type="match status" value="1"/>
</dbReference>
<dbReference type="PANTHER" id="PTHR43514">
    <property type="entry name" value="ABC TRANSPORTER I FAMILY MEMBER 10"/>
    <property type="match status" value="1"/>
</dbReference>
<dbReference type="PANTHER" id="PTHR43514:SF10">
    <property type="entry name" value="MOLYBDENUM IMPORT ATP-BINDING PROTEIN MODC 2"/>
    <property type="match status" value="1"/>
</dbReference>
<dbReference type="Pfam" id="PF00005">
    <property type="entry name" value="ABC_tran"/>
    <property type="match status" value="1"/>
</dbReference>
<dbReference type="Pfam" id="PF03459">
    <property type="entry name" value="TOBE"/>
    <property type="match status" value="1"/>
</dbReference>
<dbReference type="SMART" id="SM00382">
    <property type="entry name" value="AAA"/>
    <property type="match status" value="1"/>
</dbReference>
<dbReference type="SUPFAM" id="SSF50331">
    <property type="entry name" value="MOP-like"/>
    <property type="match status" value="1"/>
</dbReference>
<dbReference type="SUPFAM" id="SSF52540">
    <property type="entry name" value="P-loop containing nucleoside triphosphate hydrolases"/>
    <property type="match status" value="1"/>
</dbReference>
<dbReference type="PROSITE" id="PS00211">
    <property type="entry name" value="ABC_TRANSPORTER_1"/>
    <property type="match status" value="1"/>
</dbReference>
<dbReference type="PROSITE" id="PS50893">
    <property type="entry name" value="ABC_TRANSPORTER_2"/>
    <property type="match status" value="1"/>
</dbReference>
<dbReference type="PROSITE" id="PS51241">
    <property type="entry name" value="MODC"/>
    <property type="match status" value="1"/>
</dbReference>
<dbReference type="PROSITE" id="PS51866">
    <property type="entry name" value="MOP"/>
    <property type="match status" value="1"/>
</dbReference>
<comment type="function">
    <text evidence="1">Part of the ABC transporter complex ModABC involved in molybdenum import. Responsible for energy coupling to the transport system.</text>
</comment>
<comment type="catalytic activity">
    <reaction evidence="1">
        <text>molybdate(out) + ATP + H2O = molybdate(in) + ADP + phosphate + H(+)</text>
        <dbReference type="Rhea" id="RHEA:22020"/>
        <dbReference type="ChEBI" id="CHEBI:15377"/>
        <dbReference type="ChEBI" id="CHEBI:15378"/>
        <dbReference type="ChEBI" id="CHEBI:30616"/>
        <dbReference type="ChEBI" id="CHEBI:36264"/>
        <dbReference type="ChEBI" id="CHEBI:43474"/>
        <dbReference type="ChEBI" id="CHEBI:456216"/>
        <dbReference type="EC" id="7.3.2.5"/>
    </reaction>
</comment>
<comment type="subunit">
    <text evidence="1">The complex is composed of two ATP-binding proteins (ModC), two transmembrane proteins (ModB) and a solute-binding protein (ModA).</text>
</comment>
<comment type="subcellular location">
    <subcellularLocation>
        <location evidence="1">Cell inner membrane</location>
        <topology evidence="1">Peripheral membrane protein</topology>
    </subcellularLocation>
</comment>
<comment type="similarity">
    <text evidence="1">Belongs to the ABC transporter superfamily. Molybdate importer (TC 3.A.1.8) family.</text>
</comment>